<proteinExistence type="inferred from homology"/>
<comment type="function">
    <text evidence="2">3'-5' exoribonuclease that releases 5'-nucleoside monophosphates and is involved in maturation of structured RNAs.</text>
</comment>
<comment type="catalytic activity">
    <reaction evidence="2">
        <text>Exonucleolytic cleavage in the 3'- to 5'-direction to yield nucleoside 5'-phosphates.</text>
        <dbReference type="EC" id="3.1.13.1"/>
    </reaction>
</comment>
<comment type="subcellular location">
    <subcellularLocation>
        <location evidence="2">Cytoplasm</location>
    </subcellularLocation>
</comment>
<comment type="similarity">
    <text evidence="2">Belongs to the RNR ribonuclease family. RNase R subfamily.</text>
</comment>
<organism>
    <name type="scientific">Helicobacter pylori (strain J99 / ATCC 700824)</name>
    <name type="common">Campylobacter pylori J99</name>
    <dbReference type="NCBI Taxonomy" id="85963"/>
    <lineage>
        <taxon>Bacteria</taxon>
        <taxon>Pseudomonadati</taxon>
        <taxon>Campylobacterota</taxon>
        <taxon>Epsilonproteobacteria</taxon>
        <taxon>Campylobacterales</taxon>
        <taxon>Helicobacteraceae</taxon>
        <taxon>Helicobacter</taxon>
    </lineage>
</organism>
<reference key="1">
    <citation type="journal article" date="1999" name="Nature">
        <title>Genomic sequence comparison of two unrelated isolates of the human gastric pathogen Helicobacter pylori.</title>
        <authorList>
            <person name="Alm R.A."/>
            <person name="Ling L.-S.L."/>
            <person name="Moir D.T."/>
            <person name="King B.L."/>
            <person name="Brown E.D."/>
            <person name="Doig P.C."/>
            <person name="Smith D.R."/>
            <person name="Noonan B."/>
            <person name="Guild B.C."/>
            <person name="deJonge B.L."/>
            <person name="Carmel G."/>
            <person name="Tummino P.J."/>
            <person name="Caruso A."/>
            <person name="Uria-Nickelsen M."/>
            <person name="Mills D.M."/>
            <person name="Ives C."/>
            <person name="Gibson R."/>
            <person name="Merberg D."/>
            <person name="Mills S.D."/>
            <person name="Jiang Q."/>
            <person name="Taylor D.E."/>
            <person name="Vovis G.F."/>
            <person name="Trust T.J."/>
        </authorList>
    </citation>
    <scope>NUCLEOTIDE SEQUENCE [LARGE SCALE GENOMIC DNA]</scope>
    <source>
        <strain>J99 / ATCC 700824</strain>
    </source>
</reference>
<gene>
    <name evidence="2" type="primary">rnr</name>
    <name type="synonym">vacB</name>
    <name type="ordered locus">jhp_1169</name>
</gene>
<accession>Q9ZJX9</accession>
<feature type="chain" id="PRO_0000166405" description="Ribonuclease R">
    <location>
        <begin position="1"/>
        <end position="644"/>
    </location>
</feature>
<feature type="domain" description="RNB" evidence="1">
    <location>
        <begin position="211"/>
        <end position="529"/>
    </location>
</feature>
<feature type="domain" description="S1 motif" evidence="2">
    <location>
        <begin position="573"/>
        <end position="644"/>
    </location>
</feature>
<protein>
    <recommendedName>
        <fullName evidence="2">Ribonuclease R</fullName>
        <shortName evidence="2">RNase R</shortName>
        <ecNumber evidence="2">3.1.13.1</ecNumber>
    </recommendedName>
    <alternativeName>
        <fullName>VacB protein homolog</fullName>
    </alternativeName>
</protein>
<dbReference type="EC" id="3.1.13.1" evidence="2"/>
<dbReference type="EMBL" id="AE001439">
    <property type="protein sequence ID" value="AAD06743.1"/>
    <property type="molecule type" value="Genomic_DNA"/>
</dbReference>
<dbReference type="PIR" id="H71840">
    <property type="entry name" value="H71840"/>
</dbReference>
<dbReference type="RefSeq" id="WP_001161370.1">
    <property type="nucleotide sequence ID" value="NC_000921.1"/>
</dbReference>
<dbReference type="SMR" id="Q9ZJX9"/>
<dbReference type="KEGG" id="hpj:jhp_1169"/>
<dbReference type="PATRIC" id="fig|85963.30.peg.1403"/>
<dbReference type="eggNOG" id="COG0557">
    <property type="taxonomic scope" value="Bacteria"/>
</dbReference>
<dbReference type="Proteomes" id="UP000000804">
    <property type="component" value="Chromosome"/>
</dbReference>
<dbReference type="GO" id="GO:0005829">
    <property type="term" value="C:cytosol"/>
    <property type="evidence" value="ECO:0007669"/>
    <property type="project" value="TreeGrafter"/>
</dbReference>
<dbReference type="GO" id="GO:0008859">
    <property type="term" value="F:exoribonuclease II activity"/>
    <property type="evidence" value="ECO:0007669"/>
    <property type="project" value="UniProtKB-UniRule"/>
</dbReference>
<dbReference type="GO" id="GO:0003723">
    <property type="term" value="F:RNA binding"/>
    <property type="evidence" value="ECO:0007669"/>
    <property type="project" value="UniProtKB-UniRule"/>
</dbReference>
<dbReference type="GO" id="GO:0006402">
    <property type="term" value="P:mRNA catabolic process"/>
    <property type="evidence" value="ECO:0007669"/>
    <property type="project" value="TreeGrafter"/>
</dbReference>
<dbReference type="HAMAP" id="MF_01895">
    <property type="entry name" value="RNase_R"/>
    <property type="match status" value="1"/>
</dbReference>
<dbReference type="InterPro" id="IPR012340">
    <property type="entry name" value="NA-bd_OB-fold"/>
</dbReference>
<dbReference type="InterPro" id="IPR001900">
    <property type="entry name" value="RNase_II/R"/>
</dbReference>
<dbReference type="InterPro" id="IPR022966">
    <property type="entry name" value="RNase_II/R_CS"/>
</dbReference>
<dbReference type="InterPro" id="IPR011805">
    <property type="entry name" value="RNase_R"/>
</dbReference>
<dbReference type="InterPro" id="IPR054561">
    <property type="entry name" value="RNR_OB1_N"/>
</dbReference>
<dbReference type="InterPro" id="IPR050180">
    <property type="entry name" value="RNR_Ribonuclease"/>
</dbReference>
<dbReference type="PANTHER" id="PTHR23355:SF9">
    <property type="entry name" value="DIS3-LIKE EXONUCLEASE 2"/>
    <property type="match status" value="1"/>
</dbReference>
<dbReference type="PANTHER" id="PTHR23355">
    <property type="entry name" value="RIBONUCLEASE"/>
    <property type="match status" value="1"/>
</dbReference>
<dbReference type="Pfam" id="PF22896">
    <property type="entry name" value="OB_RNR_1st"/>
    <property type="match status" value="1"/>
</dbReference>
<dbReference type="Pfam" id="PF24190">
    <property type="entry name" value="OB_RNR_2nd"/>
    <property type="match status" value="1"/>
</dbReference>
<dbReference type="Pfam" id="PF00773">
    <property type="entry name" value="RNB"/>
    <property type="match status" value="1"/>
</dbReference>
<dbReference type="SMART" id="SM00955">
    <property type="entry name" value="RNB"/>
    <property type="match status" value="1"/>
</dbReference>
<dbReference type="SUPFAM" id="SSF50249">
    <property type="entry name" value="Nucleic acid-binding proteins"/>
    <property type="match status" value="1"/>
</dbReference>
<dbReference type="PROSITE" id="PS01175">
    <property type="entry name" value="RIBONUCLEASE_II"/>
    <property type="match status" value="1"/>
</dbReference>
<sequence>MQGFLRSLFFGVKKIPKRFAPLVEKGVLKEALQSNKDRYLLKEGFDIGKIERVKNKAFFISLAKNYPKDPLIKNLPPSFKTDALILCQIECSKKRPIAFFKAALLNADHAMIAYLAKEKNQIVAIPFKEPFKKPISLKHSQRSLLELPRHCVVKIDLKKREISEILGALEDPLIDENLSLSLFDRIKDFSKDCLDLAQYYAQLKASDFKDRINYSHIPFITIDPKDAKDFDDAIFYDKEKNTLFVAVADVSEFVPKHSSLDKEARIRGFSVYFPNSVYPMLPLSLSQGACSLKAFEKRLALVYEIPLDNLKNARLSQGVIEVRANCAYEEINHFLNTQQSSLGKDLQQSLLGFLEVALKLKKERLKKGFNFNSFENKLYLNEEGRIEKIETEKESGAHTLIEEAMLLANQSSARLLDGHFHNRGIYRTHKEPSLEQQKRLYDKLFDYEIVRPKNMGFFPFLEHALKISQEKSIEREVSRLIIKSQNLALYSPMQESHFGLGFASYTHFTSPIRRYSDLALHRLLKELLFHQAKGCSYLLEETPELCAELNALQKKAALIERDFIKRKFARLALEFLEKEFLGVVLEAKDWVVVGLKEFIGLKVLIKTNKVFKPLEKVRIKITHADLILGQVRGEITERIKEHVS</sequence>
<evidence type="ECO:0000255" key="1"/>
<evidence type="ECO:0000255" key="2">
    <source>
        <dbReference type="HAMAP-Rule" id="MF_01895"/>
    </source>
</evidence>
<name>RNR_HELPJ</name>
<keyword id="KW-0963">Cytoplasm</keyword>
<keyword id="KW-0269">Exonuclease</keyword>
<keyword id="KW-0378">Hydrolase</keyword>
<keyword id="KW-0540">Nuclease</keyword>
<keyword id="KW-0694">RNA-binding</keyword>